<gene>
    <name type="ordered locus">VIT_16s0100g00290</name>
    <name type="ORF">GSVIVT00012394001</name>
    <name type="ORF">LOC100232980</name>
    <name type="ORF">VITISV_028585</name>
</gene>
<name>IDND_VITVI</name>
<sequence>MGKGGNSEDAVSGKEHGEENMAAWLLGIKTLKIQPYILPSLGPYDVKVRIKAVGICGSDVHHFKTMRCANFIVKKPMVIGHECAGIIEEVGSEVKNLVAGDRVALEPGISCNRCSLCRNGQYNLCREMKFFGSPPTNGSLANQVVHPSNLCFKLPDNVSLEEGAMCEPLSVGIHACRRANVGPETNVLIMGSGPIGLVTMLAARAFGAPRIVLVDVDDQRLAIAKDLGADDIIRVSTNIQDLDEEVAKIQSTMVTGVDVSFDCVGFNKTMSTALNATRAGGKVCLVGLAQSEMTVPLTPAAAREVDIVGIFRYRNTWPLCLEFLRSGKIDVKPLITHRFTFSQKDVEEAFETSARGGNAIKVMFNL</sequence>
<organism>
    <name type="scientific">Vitis vinifera</name>
    <name type="common">Grape</name>
    <dbReference type="NCBI Taxonomy" id="29760"/>
    <lineage>
        <taxon>Eukaryota</taxon>
        <taxon>Viridiplantae</taxon>
        <taxon>Streptophyta</taxon>
        <taxon>Embryophyta</taxon>
        <taxon>Tracheophyta</taxon>
        <taxon>Spermatophyta</taxon>
        <taxon>Magnoliopsida</taxon>
        <taxon>eudicotyledons</taxon>
        <taxon>Gunneridae</taxon>
        <taxon>Pentapetalae</taxon>
        <taxon>rosids</taxon>
        <taxon>Vitales</taxon>
        <taxon>Vitaceae</taxon>
        <taxon>Viteae</taxon>
        <taxon>Vitis</taxon>
    </lineage>
</organism>
<accession>Q1PSI9</accession>
<accession>A5ANX2</accession>
<accession>A7R1S9</accession>
<accession>F6HP72</accession>
<feature type="chain" id="PRO_0000367051" description="L-idonate 5-dehydrogenase">
    <location>
        <begin position="1"/>
        <end position="366"/>
    </location>
</feature>
<feature type="binding site" evidence="1">
    <location>
        <position position="56"/>
    </location>
    <ligand>
        <name>Zn(2+)</name>
        <dbReference type="ChEBI" id="CHEBI:29105"/>
        <label>1</label>
        <note>catalytic</note>
    </ligand>
</feature>
<feature type="binding site" evidence="1">
    <location>
        <position position="81"/>
    </location>
    <ligand>
        <name>Zn(2+)</name>
        <dbReference type="ChEBI" id="CHEBI:29105"/>
        <label>1</label>
        <note>catalytic</note>
    </ligand>
</feature>
<feature type="binding site" evidence="1">
    <location>
        <position position="111"/>
    </location>
    <ligand>
        <name>Zn(2+)</name>
        <dbReference type="ChEBI" id="CHEBI:29105"/>
        <label>2</label>
    </ligand>
</feature>
<feature type="binding site" evidence="1">
    <location>
        <position position="114"/>
    </location>
    <ligand>
        <name>Zn(2+)</name>
        <dbReference type="ChEBI" id="CHEBI:29105"/>
        <label>2</label>
    </ligand>
</feature>
<feature type="binding site" evidence="1">
    <location>
        <position position="117"/>
    </location>
    <ligand>
        <name>Zn(2+)</name>
        <dbReference type="ChEBI" id="CHEBI:29105"/>
        <label>2</label>
    </ligand>
</feature>
<feature type="binding site" evidence="1">
    <location>
        <position position="125"/>
    </location>
    <ligand>
        <name>Zn(2+)</name>
        <dbReference type="ChEBI" id="CHEBI:29105"/>
        <label>2</label>
    </ligand>
</feature>
<feature type="binding site" evidence="1">
    <location>
        <position position="167"/>
    </location>
    <ligand>
        <name>Zn(2+)</name>
        <dbReference type="ChEBI" id="CHEBI:29105"/>
        <label>1</label>
        <note>catalytic</note>
    </ligand>
</feature>
<feature type="sequence conflict" description="In Ref. 1; ABA01327." evidence="3" ref="1">
    <original>G</original>
    <variation>S</variation>
    <location>
        <position position="13"/>
    </location>
</feature>
<feature type="sequence conflict" description="In Ref. 1; ABA01327 and 3; CAN73609." evidence="3" ref="1 3">
    <original>Y</original>
    <variation>H</variation>
    <location>
        <position position="44"/>
    </location>
</feature>
<feature type="sequence conflict" description="In Ref. 1; ABA01327 and 3; CAN73609." evidence="3" ref="1 3">
    <original>A</original>
    <variation>V</variation>
    <location>
        <position position="99"/>
    </location>
</feature>
<feature type="sequence conflict" description="In Ref. 1; ABA01327." evidence="3" ref="1">
    <original>F</original>
    <variation>L</variation>
    <location>
        <position position="261"/>
    </location>
</feature>
<reference key="1">
    <citation type="journal article" date="2006" name="Proc. Natl. Acad. Sci. U.S.A.">
        <title>L-tartaric acid synthesis from vitamin C in higher plants.</title>
        <authorList>
            <person name="DeBolt S."/>
            <person name="Cook D.R."/>
            <person name="Ford C.M."/>
        </authorList>
    </citation>
    <scope>NUCLEOTIDE SEQUENCE [MRNA]</scope>
    <scope>FUNCTION</scope>
    <scope>CATALYTIC ACTIVITY</scope>
    <scope>DEVELOPMENTAL STAGE</scope>
    <scope>BIOPHYSICOCHEMICAL PROPERTIES</scope>
    <source>
        <strain>cv. Cabernet Sauvignon</strain>
    </source>
</reference>
<reference key="2">
    <citation type="journal article" date="2007" name="Nature">
        <title>The grapevine genome sequence suggests ancestral hexaploidization in major angiosperm phyla.</title>
        <authorList>
            <person name="Jaillon O."/>
            <person name="Aury J.-M."/>
            <person name="Noel B."/>
            <person name="Policriti A."/>
            <person name="Clepet C."/>
            <person name="Casagrande A."/>
            <person name="Choisne N."/>
            <person name="Aubourg S."/>
            <person name="Vitulo N."/>
            <person name="Jubin C."/>
            <person name="Vezzi A."/>
            <person name="Legeai F."/>
            <person name="Hugueney P."/>
            <person name="Dasilva C."/>
            <person name="Horner D."/>
            <person name="Mica E."/>
            <person name="Jublot D."/>
            <person name="Poulain J."/>
            <person name="Bruyere C."/>
            <person name="Billault A."/>
            <person name="Segurens B."/>
            <person name="Gouyvenoux M."/>
            <person name="Ugarte E."/>
            <person name="Cattonaro F."/>
            <person name="Anthouard V."/>
            <person name="Vico V."/>
            <person name="Del Fabbro C."/>
            <person name="Alaux M."/>
            <person name="Di Gaspero G."/>
            <person name="Dumas V."/>
            <person name="Felice N."/>
            <person name="Paillard S."/>
            <person name="Juman I."/>
            <person name="Moroldo M."/>
            <person name="Scalabrin S."/>
            <person name="Canaguier A."/>
            <person name="Le Clainche I."/>
            <person name="Malacrida G."/>
            <person name="Durand E."/>
            <person name="Pesole G."/>
            <person name="Laucou V."/>
            <person name="Chatelet P."/>
            <person name="Merdinoglu D."/>
            <person name="Delledonne M."/>
            <person name="Pezzotti M."/>
            <person name="Lecharny A."/>
            <person name="Scarpelli C."/>
            <person name="Artiguenave F."/>
            <person name="Pe M.E."/>
            <person name="Valle G."/>
            <person name="Morgante M."/>
            <person name="Caboche M."/>
            <person name="Adam-Blondon A.-F."/>
            <person name="Weissenbach J."/>
            <person name="Quetier F."/>
            <person name="Wincker P."/>
        </authorList>
    </citation>
    <scope>NUCLEOTIDE SEQUENCE [LARGE SCALE GENOMIC DNA]</scope>
    <source>
        <strain>cv. Pinot noir / PN40024</strain>
    </source>
</reference>
<reference key="3">
    <citation type="journal article" date="2007" name="PLoS ONE">
        <title>A high quality draft consensus sequence of the genome of a heterozygous grapevine variety.</title>
        <authorList>
            <person name="Velasco R."/>
            <person name="Zharkikh A."/>
            <person name="Troggio M."/>
            <person name="Cartwright D.A."/>
            <person name="Cestaro A."/>
            <person name="Pruss D."/>
            <person name="Pindo M."/>
            <person name="FitzGerald L.M."/>
            <person name="Vezzulli S."/>
            <person name="Reid J."/>
            <person name="Malacarne G."/>
            <person name="Iliev D."/>
            <person name="Coppola G."/>
            <person name="Wardell B."/>
            <person name="Micheletti D."/>
            <person name="Macalma T."/>
            <person name="Facci M."/>
            <person name="Mitchell J.T."/>
            <person name="Perazzolli M."/>
            <person name="Eldredge G."/>
            <person name="Gatto P."/>
            <person name="Oyzerski R."/>
            <person name="Moretto M."/>
            <person name="Gutin N."/>
            <person name="Stefanini M."/>
            <person name="Chen Y."/>
            <person name="Segala C."/>
            <person name="Davenport C."/>
            <person name="Dematte L."/>
            <person name="Mraz A."/>
            <person name="Battilana J."/>
            <person name="Stormo K."/>
            <person name="Costa F."/>
            <person name="Tao Q."/>
            <person name="Si-Ammour A."/>
            <person name="Harkins T."/>
            <person name="Lackey A."/>
            <person name="Perbost C."/>
            <person name="Taillon B."/>
            <person name="Stella A."/>
            <person name="Solovyev V."/>
            <person name="Fawcett J.A."/>
            <person name="Sterck L."/>
            <person name="Vandepoele K."/>
            <person name="Grando S.M."/>
            <person name="Toppo S."/>
            <person name="Moser C."/>
            <person name="Lanchbury J."/>
            <person name="Bogden R."/>
            <person name="Skolnick M."/>
            <person name="Sgaramella V."/>
            <person name="Bhatnagar S.K."/>
            <person name="Fontana P."/>
            <person name="Gutin A."/>
            <person name="Van de Peer Y."/>
            <person name="Salamini F."/>
            <person name="Viola R."/>
        </authorList>
    </citation>
    <scope>NUCLEOTIDE SEQUENCE [LARGE SCALE GENOMIC DNA]</scope>
    <source>
        <strain>cv. Pinot noir</strain>
    </source>
</reference>
<evidence type="ECO:0000250" key="1"/>
<evidence type="ECO:0000269" key="2">
    <source>
    </source>
</evidence>
<evidence type="ECO:0000305" key="3"/>
<keyword id="KW-0479">Metal-binding</keyword>
<keyword id="KW-0520">NAD</keyword>
<keyword id="KW-0560">Oxidoreductase</keyword>
<keyword id="KW-1185">Reference proteome</keyword>
<keyword id="KW-0862">Zinc</keyword>
<protein>
    <recommendedName>
        <fullName>L-idonate 5-dehydrogenase</fullName>
        <ecNumber>1.1.1.366</ecNumber>
    </recommendedName>
</protein>
<dbReference type="EC" id="1.1.1.366"/>
<dbReference type="EMBL" id="DQ124868">
    <property type="protein sequence ID" value="ABA01327.1"/>
    <property type="molecule type" value="mRNA"/>
</dbReference>
<dbReference type="EMBL" id="FN596000">
    <property type="protein sequence ID" value="CCB56478.1"/>
    <property type="status" value="ALT_SEQ"/>
    <property type="molecule type" value="Genomic_DNA"/>
</dbReference>
<dbReference type="EMBL" id="FN597040">
    <property type="status" value="NOT_ANNOTATED_CDS"/>
    <property type="molecule type" value="Genomic_DNA"/>
</dbReference>
<dbReference type="EMBL" id="AM431054">
    <property type="protein sequence ID" value="CAN73609.1"/>
    <property type="status" value="ALT_SEQ"/>
    <property type="molecule type" value="Genomic_DNA"/>
</dbReference>
<dbReference type="RefSeq" id="NP_001267883.1">
    <property type="nucleotide sequence ID" value="NM_001280954.1"/>
</dbReference>
<dbReference type="RefSeq" id="XP_002267662.2">
    <property type="nucleotide sequence ID" value="XM_002267626.4"/>
</dbReference>
<dbReference type="RefSeq" id="XP_010662490.1">
    <property type="nucleotide sequence ID" value="XM_010664188.2"/>
</dbReference>
<dbReference type="SMR" id="Q1PSI9"/>
<dbReference type="STRING" id="29760.Q1PSI9"/>
<dbReference type="PaxDb" id="29760-VIT_16s0100g00290.t01"/>
<dbReference type="EnsemblPlants" id="Vitvi16g01857_t006">
    <property type="protein sequence ID" value="Vitvi16g01857_P006"/>
    <property type="gene ID" value="Vitvi16g01857"/>
</dbReference>
<dbReference type="GeneID" id="100232980"/>
<dbReference type="Gramene" id="Vitvi16g01857_t006">
    <property type="protein sequence ID" value="Vitvi16g01857_P006"/>
    <property type="gene ID" value="Vitvi16g01857"/>
</dbReference>
<dbReference type="KEGG" id="vvi:100232980"/>
<dbReference type="eggNOG" id="KOG0024">
    <property type="taxonomic scope" value="Eukaryota"/>
</dbReference>
<dbReference type="HOGENOM" id="CLU_362663_0_0_1"/>
<dbReference type="InParanoid" id="Q1PSI9"/>
<dbReference type="OrthoDB" id="256333at2759"/>
<dbReference type="BioCyc" id="MetaCyc:MONOMER-16192"/>
<dbReference type="BRENDA" id="1.1.1.264">
    <property type="organism ID" value="6671"/>
</dbReference>
<dbReference type="BRENDA" id="1.1.1.366">
    <property type="organism ID" value="6671"/>
</dbReference>
<dbReference type="SABIO-RK" id="Q1PSI9"/>
<dbReference type="UniPathway" id="UPA00793"/>
<dbReference type="Proteomes" id="UP000009183">
    <property type="component" value="Chromosome 16"/>
</dbReference>
<dbReference type="ExpressionAtlas" id="Q1PSI9">
    <property type="expression patterns" value="baseline and differential"/>
</dbReference>
<dbReference type="GO" id="GO:0102198">
    <property type="term" value="F:L-idonate 5-dehydrogenase (NAD+) activity"/>
    <property type="evidence" value="ECO:0007669"/>
    <property type="project" value="UniProtKB-EC"/>
</dbReference>
<dbReference type="GO" id="GO:0008270">
    <property type="term" value="F:zinc ion binding"/>
    <property type="evidence" value="ECO:0007669"/>
    <property type="project" value="InterPro"/>
</dbReference>
<dbReference type="GO" id="GO:0046183">
    <property type="term" value="P:L-idonate catabolic process"/>
    <property type="evidence" value="ECO:0007669"/>
    <property type="project" value="UniProtKB-UniPathway"/>
</dbReference>
<dbReference type="CDD" id="cd05285">
    <property type="entry name" value="sorbitol_DH"/>
    <property type="match status" value="1"/>
</dbReference>
<dbReference type="FunFam" id="3.40.50.720:FF:000068">
    <property type="entry name" value="Sorbitol dehydrogenase"/>
    <property type="match status" value="1"/>
</dbReference>
<dbReference type="Gene3D" id="3.90.180.10">
    <property type="entry name" value="Medium-chain alcohol dehydrogenases, catalytic domain"/>
    <property type="match status" value="1"/>
</dbReference>
<dbReference type="Gene3D" id="3.40.50.720">
    <property type="entry name" value="NAD(P)-binding Rossmann-like Domain"/>
    <property type="match status" value="1"/>
</dbReference>
<dbReference type="InterPro" id="IPR013149">
    <property type="entry name" value="ADH-like_C"/>
</dbReference>
<dbReference type="InterPro" id="IPR013154">
    <property type="entry name" value="ADH-like_N"/>
</dbReference>
<dbReference type="InterPro" id="IPR002328">
    <property type="entry name" value="ADH_Zn_CS"/>
</dbReference>
<dbReference type="InterPro" id="IPR011032">
    <property type="entry name" value="GroES-like_sf"/>
</dbReference>
<dbReference type="InterPro" id="IPR036291">
    <property type="entry name" value="NAD(P)-bd_dom_sf"/>
</dbReference>
<dbReference type="InterPro" id="IPR020843">
    <property type="entry name" value="PKS_ER"/>
</dbReference>
<dbReference type="InterPro" id="IPR045306">
    <property type="entry name" value="SDH-like"/>
</dbReference>
<dbReference type="PANTHER" id="PTHR43161:SF17">
    <property type="entry name" value="L-IDONATE 5-DEHYDROGENASE"/>
    <property type="match status" value="1"/>
</dbReference>
<dbReference type="PANTHER" id="PTHR43161">
    <property type="entry name" value="SORBITOL DEHYDROGENASE"/>
    <property type="match status" value="1"/>
</dbReference>
<dbReference type="Pfam" id="PF08240">
    <property type="entry name" value="ADH_N"/>
    <property type="match status" value="1"/>
</dbReference>
<dbReference type="Pfam" id="PF00107">
    <property type="entry name" value="ADH_zinc_N"/>
    <property type="match status" value="1"/>
</dbReference>
<dbReference type="SMART" id="SM00829">
    <property type="entry name" value="PKS_ER"/>
    <property type="match status" value="1"/>
</dbReference>
<dbReference type="SUPFAM" id="SSF50129">
    <property type="entry name" value="GroES-like"/>
    <property type="match status" value="1"/>
</dbReference>
<dbReference type="SUPFAM" id="SSF51735">
    <property type="entry name" value="NAD(P)-binding Rossmann-fold domains"/>
    <property type="match status" value="1"/>
</dbReference>
<dbReference type="PROSITE" id="PS00059">
    <property type="entry name" value="ADH_ZINC"/>
    <property type="match status" value="1"/>
</dbReference>
<proteinExistence type="evidence at protein level"/>
<comment type="function">
    <text evidence="2">Involved in the catabolism of ascorbate to tartrate. The enzyme has no activity with NADP(+).</text>
</comment>
<comment type="catalytic activity">
    <reaction evidence="2">
        <text>L-idonate + NAD(+) = 5-dehydro-D-gluconate + NADH + H(+)</text>
        <dbReference type="Rhea" id="RHEA:21172"/>
        <dbReference type="ChEBI" id="CHEBI:15378"/>
        <dbReference type="ChEBI" id="CHEBI:17796"/>
        <dbReference type="ChEBI" id="CHEBI:57540"/>
        <dbReference type="ChEBI" id="CHEBI:57945"/>
        <dbReference type="ChEBI" id="CHEBI:58143"/>
        <dbReference type="EC" id="1.1.1.366"/>
    </reaction>
</comment>
<comment type="cofactor">
    <cofactor evidence="1">
        <name>Zn(2+)</name>
        <dbReference type="ChEBI" id="CHEBI:29105"/>
    </cofactor>
</comment>
<comment type="biophysicochemical properties">
    <kinetics>
        <KM evidence="2">2.2 mM for L-idonate in the forward reaction</KM>
        <KM evidence="2">12.5 mM for 5-dehydro-D-gluconate in the reverse reaction</KM>
    </kinetics>
</comment>
<comment type="pathway">
    <text>Carbohydrate acid metabolism; L-idonate degradation.</text>
</comment>
<comment type="developmental stage">
    <text evidence="2">Peak of expression 4 weeks post flowering, at the time when tartaric acid biosynthesis occurs.</text>
</comment>
<comment type="similarity">
    <text evidence="3">Belongs to the zinc-containing alcohol dehydrogenase family.</text>
</comment>
<comment type="sequence caution" evidence="3">
    <conflict type="erroneous gene model prediction">
        <sequence resource="EMBL-CDS" id="CAN73609"/>
    </conflict>
</comment>
<comment type="sequence caution" evidence="3">
    <conflict type="erroneous gene model prediction">
        <sequence resource="EMBL-CDS" id="CCB56478"/>
    </conflict>
</comment>